<evidence type="ECO:0000250" key="1"/>
<evidence type="ECO:0000255" key="2"/>
<evidence type="ECO:0000255" key="3">
    <source>
        <dbReference type="PROSITE-ProRule" id="PRU01103"/>
    </source>
</evidence>
<evidence type="ECO:0000255" key="4">
    <source>
        <dbReference type="PROSITE-ProRule" id="PRU10094"/>
    </source>
</evidence>
<evidence type="ECO:0000305" key="5"/>
<gene>
    <name type="primary">PAPA</name>
</gene>
<comment type="induction">
    <text>Expressed under carbon starvation conditions.</text>
</comment>
<comment type="similarity">
    <text evidence="5">Belongs to the peptidase A1 family.</text>
</comment>
<organism>
    <name type="scientific">Podospora anserina</name>
    <name type="common">Pleurage anserina</name>
    <dbReference type="NCBI Taxonomy" id="2587412"/>
    <lineage>
        <taxon>Eukaryota</taxon>
        <taxon>Fungi</taxon>
        <taxon>Dikarya</taxon>
        <taxon>Ascomycota</taxon>
        <taxon>Pezizomycotina</taxon>
        <taxon>Sordariomycetes</taxon>
        <taxon>Sordariomycetidae</taxon>
        <taxon>Sordariales</taxon>
        <taxon>Podosporaceae</taxon>
        <taxon>Podospora</taxon>
    </lineage>
</organism>
<name>CARP_PODAS</name>
<dbReference type="EC" id="3.4.23.-"/>
<dbReference type="EMBL" id="AF016054">
    <property type="protein sequence ID" value="AAC49997.1"/>
    <property type="molecule type" value="Genomic_DNA"/>
</dbReference>
<dbReference type="PIR" id="JC6557">
    <property type="entry name" value="JC6557"/>
</dbReference>
<dbReference type="SMR" id="O13340"/>
<dbReference type="MEROPS" id="A01.044"/>
<dbReference type="GlyCosmos" id="O13340">
    <property type="glycosylation" value="3 sites, No reported glycans"/>
</dbReference>
<dbReference type="VEuPathDB" id="FungiDB:PODANS_6_11460"/>
<dbReference type="GO" id="GO:0004190">
    <property type="term" value="F:aspartic-type endopeptidase activity"/>
    <property type="evidence" value="ECO:0007669"/>
    <property type="project" value="UniProtKB-KW"/>
</dbReference>
<dbReference type="GO" id="GO:0006508">
    <property type="term" value="P:proteolysis"/>
    <property type="evidence" value="ECO:0007669"/>
    <property type="project" value="UniProtKB-KW"/>
</dbReference>
<dbReference type="CDD" id="cd06097">
    <property type="entry name" value="Aspergillopepsin_like"/>
    <property type="match status" value="1"/>
</dbReference>
<dbReference type="FunFam" id="2.40.70.10:FF:000024">
    <property type="entry name" value="Endothiapepsin"/>
    <property type="match status" value="1"/>
</dbReference>
<dbReference type="FunFam" id="2.40.70.10:FF:000026">
    <property type="entry name" value="Endothiapepsin"/>
    <property type="match status" value="1"/>
</dbReference>
<dbReference type="Gene3D" id="2.40.70.10">
    <property type="entry name" value="Acid Proteases"/>
    <property type="match status" value="2"/>
</dbReference>
<dbReference type="InterPro" id="IPR001461">
    <property type="entry name" value="Aspartic_peptidase_A1"/>
</dbReference>
<dbReference type="InterPro" id="IPR001969">
    <property type="entry name" value="Aspartic_peptidase_AS"/>
</dbReference>
<dbReference type="InterPro" id="IPR034163">
    <property type="entry name" value="Aspergillopepsin-like_cat_dom"/>
</dbReference>
<dbReference type="InterPro" id="IPR033121">
    <property type="entry name" value="PEPTIDASE_A1"/>
</dbReference>
<dbReference type="InterPro" id="IPR021109">
    <property type="entry name" value="Peptidase_aspartic_dom_sf"/>
</dbReference>
<dbReference type="PANTHER" id="PTHR47966:SF2">
    <property type="entry name" value="ASPERGILLOPEPSIN-1-RELATED"/>
    <property type="match status" value="1"/>
</dbReference>
<dbReference type="PANTHER" id="PTHR47966">
    <property type="entry name" value="BETA-SITE APP-CLEAVING ENZYME, ISOFORM A-RELATED"/>
    <property type="match status" value="1"/>
</dbReference>
<dbReference type="Pfam" id="PF00026">
    <property type="entry name" value="Asp"/>
    <property type="match status" value="1"/>
</dbReference>
<dbReference type="PRINTS" id="PR00792">
    <property type="entry name" value="PEPSIN"/>
</dbReference>
<dbReference type="SUPFAM" id="SSF50630">
    <property type="entry name" value="Acid proteases"/>
    <property type="match status" value="1"/>
</dbReference>
<dbReference type="PROSITE" id="PS00141">
    <property type="entry name" value="ASP_PROTEASE"/>
    <property type="match status" value="2"/>
</dbReference>
<dbReference type="PROSITE" id="PS51767">
    <property type="entry name" value="PEPTIDASE_A1"/>
    <property type="match status" value="1"/>
</dbReference>
<accession>O13340</accession>
<feature type="signal peptide" evidence="2">
    <location>
        <begin position="1"/>
        <end position="28"/>
    </location>
</feature>
<feature type="propeptide" id="PRO_0000025877" description="Activation peptide" evidence="1">
    <location>
        <begin position="29"/>
        <end position="91"/>
    </location>
</feature>
<feature type="chain" id="PRO_0000025878" description="Podosporapepsin">
    <location>
        <begin position="92"/>
        <end position="425"/>
    </location>
</feature>
<feature type="domain" description="Peptidase A1" evidence="3">
    <location>
        <begin position="108"/>
        <end position="419"/>
    </location>
</feature>
<feature type="active site" evidence="4">
    <location>
        <position position="126"/>
    </location>
</feature>
<feature type="active site" evidence="4">
    <location>
        <position position="310"/>
    </location>
</feature>
<feature type="glycosylation site" description="N-linked (GlcNAc...) asparagine" evidence="2">
    <location>
        <position position="184"/>
    </location>
</feature>
<feature type="glycosylation site" description="N-linked (GlcNAc...) asparagine" evidence="2">
    <location>
        <position position="273"/>
    </location>
</feature>
<feature type="glycosylation site" description="N-linked (GlcNAc...) asparagine" evidence="2">
    <location>
        <position position="370"/>
    </location>
</feature>
<feature type="disulfide bond" evidence="1">
    <location>
        <begin position="346"/>
        <end position="381"/>
    </location>
</feature>
<reference key="1">
    <citation type="journal article" date="1998" name="Gene">
        <title>Characterization of a gene from the filamentous fungus Podospora anserina encoding an aspartyl protease induced upon carbon starvation.</title>
        <authorList>
            <person name="Paoletti M."/>
            <person name="Clave C."/>
            <person name="Begueret J."/>
        </authorList>
    </citation>
    <scope>NUCLEOTIDE SEQUENCE [GENOMIC DNA]</scope>
</reference>
<protein>
    <recommendedName>
        <fullName>Podosporapepsin</fullName>
        <ecNumber>3.4.23.-</ecNumber>
    </recommendedName>
</protein>
<proteinExistence type="evidence at transcript level"/>
<keyword id="KW-0064">Aspartyl protease</keyword>
<keyword id="KW-0165">Cleavage on pair of basic residues</keyword>
<keyword id="KW-1015">Disulfide bond</keyword>
<keyword id="KW-0325">Glycoprotein</keyword>
<keyword id="KW-0378">Hydrolase</keyword>
<keyword id="KW-0645">Protease</keyword>
<keyword id="KW-0732">Signal</keyword>
<keyword id="KW-0865">Zymogen</keyword>
<sequence length="425" mass="45921">MVSLTDLFLASLLVPTSPWLCLPPRIDTIDQRGGRVTLKQVRNPRGHKAFNPARATYRTFLKYGVPAPDYIKKAVAHIDEEQEEAFARIKRDTGSAAAIPINEVDIAYVTPVTIGTPPQTLMLDLDTGSSDLWVFSSLTPSNQVRGQEIYSPTKSSTSKLLSGHTWSIRYGDGSGSRGTVYTDNFTIGGLEVKSQAVQAALEVSSMLTQEQSLDGLVGLGFSALNTVRPSSQLTFFDNARPNLDEEVFTADLKYHATGSYDFGFIDSKKYAGNITYTAVQQSPGYWTHSLSGYSVGSGAFQASQISGISDTGTTLLYLPTAIVTAYYRQVQGAQNSQYYGGYVFPCSSTLPTFTFGIEGARFTIPASYINYTRISPTSTTCYGGLQSSSGLGINIFGDVALKRAFVVFSGTNPPRIGFAIKPLAS</sequence>